<accession>Q2NS89</accession>
<dbReference type="EC" id="2.3.1.-" evidence="1"/>
<dbReference type="EMBL" id="AP008232">
    <property type="protein sequence ID" value="BAE74986.1"/>
    <property type="molecule type" value="Genomic_DNA"/>
</dbReference>
<dbReference type="RefSeq" id="WP_011411535.1">
    <property type="nucleotide sequence ID" value="NC_007712.1"/>
</dbReference>
<dbReference type="SMR" id="Q2NS89"/>
<dbReference type="STRING" id="343509.SG1711"/>
<dbReference type="KEGG" id="sgl:SG1711"/>
<dbReference type="eggNOG" id="COG0456">
    <property type="taxonomic scope" value="Bacteria"/>
</dbReference>
<dbReference type="HOGENOM" id="CLU_013985_34_1_6"/>
<dbReference type="OrthoDB" id="1821130at2"/>
<dbReference type="BioCyc" id="SGLO343509:SGP1_RS15565-MONOMER"/>
<dbReference type="Proteomes" id="UP000001932">
    <property type="component" value="Chromosome"/>
</dbReference>
<dbReference type="GO" id="GO:0016747">
    <property type="term" value="F:acyltransferase activity, transferring groups other than amino-acyl groups"/>
    <property type="evidence" value="ECO:0007669"/>
    <property type="project" value="UniProtKB-UniRule"/>
</dbReference>
<dbReference type="CDD" id="cd04301">
    <property type="entry name" value="NAT_SF"/>
    <property type="match status" value="1"/>
</dbReference>
<dbReference type="Gene3D" id="3.40.630.30">
    <property type="match status" value="1"/>
</dbReference>
<dbReference type="HAMAP" id="MF_01127">
    <property type="entry name" value="Acetyltransf_YpeA"/>
    <property type="match status" value="1"/>
</dbReference>
<dbReference type="InterPro" id="IPR023072">
    <property type="entry name" value="Acetyltransferase_YpeA"/>
</dbReference>
<dbReference type="InterPro" id="IPR016181">
    <property type="entry name" value="Acyl_CoA_acyltransferase"/>
</dbReference>
<dbReference type="InterPro" id="IPR000182">
    <property type="entry name" value="GNAT_dom"/>
</dbReference>
<dbReference type="NCBIfam" id="NF002959">
    <property type="entry name" value="PRK03624.1"/>
    <property type="match status" value="1"/>
</dbReference>
<dbReference type="PANTHER" id="PTHR43072:SF51">
    <property type="entry name" value="ABC SUPERFAMILY TRANSPORT PROTEIN"/>
    <property type="match status" value="1"/>
</dbReference>
<dbReference type="PANTHER" id="PTHR43072">
    <property type="entry name" value="N-ACETYLTRANSFERASE"/>
    <property type="match status" value="1"/>
</dbReference>
<dbReference type="Pfam" id="PF00583">
    <property type="entry name" value="Acetyltransf_1"/>
    <property type="match status" value="1"/>
</dbReference>
<dbReference type="SUPFAM" id="SSF55729">
    <property type="entry name" value="Acyl-CoA N-acyltransferases (Nat)"/>
    <property type="match status" value="1"/>
</dbReference>
<dbReference type="PROSITE" id="PS51186">
    <property type="entry name" value="GNAT"/>
    <property type="match status" value="1"/>
</dbReference>
<keyword id="KW-0012">Acyltransferase</keyword>
<keyword id="KW-0808">Transferase</keyword>
<gene>
    <name type="ordered locus">SG1711</name>
</gene>
<name>Y1711_SODGM</name>
<sequence length="142" mass="16412">MEIRVFRHDDFEEVITLWERCDLLRPWNDPEMDIERKLNHDPDLFLVAEVAGEVVGSIMGGYDGHRGAAYYLGVHPDYRGRGIANALISRLEKKLIARGCPKINLMVRGDNDAVISMYEKLEYEMQDSVLLLGKRLIEDQEY</sequence>
<proteinExistence type="inferred from homology"/>
<organism>
    <name type="scientific">Sodalis glossinidius (strain morsitans)</name>
    <dbReference type="NCBI Taxonomy" id="343509"/>
    <lineage>
        <taxon>Bacteria</taxon>
        <taxon>Pseudomonadati</taxon>
        <taxon>Pseudomonadota</taxon>
        <taxon>Gammaproteobacteria</taxon>
        <taxon>Enterobacterales</taxon>
        <taxon>Bruguierivoracaceae</taxon>
        <taxon>Sodalis</taxon>
    </lineage>
</organism>
<evidence type="ECO:0000255" key="1">
    <source>
        <dbReference type="HAMAP-Rule" id="MF_01127"/>
    </source>
</evidence>
<feature type="chain" id="PRO_0000298449" description="Acetyltransferase SG1711">
    <location>
        <begin position="1"/>
        <end position="142"/>
    </location>
</feature>
<feature type="domain" description="N-acetyltransferase" evidence="1">
    <location>
        <begin position="1"/>
        <end position="142"/>
    </location>
</feature>
<reference key="1">
    <citation type="journal article" date="2006" name="Genome Res.">
        <title>Massive genome erosion and functional adaptations provide insights into the symbiotic lifestyle of Sodalis glossinidius in the tsetse host.</title>
        <authorList>
            <person name="Toh H."/>
            <person name="Weiss B.L."/>
            <person name="Perkin S.A.H."/>
            <person name="Yamashita A."/>
            <person name="Oshima K."/>
            <person name="Hattori M."/>
            <person name="Aksoy S."/>
        </authorList>
    </citation>
    <scope>NUCLEOTIDE SEQUENCE [LARGE SCALE GENOMIC DNA]</scope>
    <source>
        <strain>morsitans</strain>
    </source>
</reference>
<protein>
    <recommendedName>
        <fullName evidence="1">Acetyltransferase SG1711</fullName>
        <ecNumber evidence="1">2.3.1.-</ecNumber>
    </recommendedName>
</protein>
<comment type="similarity">
    <text evidence="1">Belongs to the acetyltransferase family. YpeA subfamily.</text>
</comment>